<keyword id="KW-0963">Cytoplasm</keyword>
<keyword id="KW-0507">mRNA processing</keyword>
<keyword id="KW-0508">mRNA splicing</keyword>
<keyword id="KW-0539">Nucleus</keyword>
<keyword id="KW-1185">Reference proteome</keyword>
<keyword id="KW-0747">Spliceosome</keyword>
<protein>
    <recommendedName>
        <fullName>Pre-mRNA-splicing factor CWC22</fullName>
    </recommendedName>
</protein>
<name>CWC22_EREGS</name>
<reference key="1">
    <citation type="journal article" date="2004" name="Science">
        <title>The Ashbya gossypii genome as a tool for mapping the ancient Saccharomyces cerevisiae genome.</title>
        <authorList>
            <person name="Dietrich F.S."/>
            <person name="Voegeli S."/>
            <person name="Brachat S."/>
            <person name="Lerch A."/>
            <person name="Gates K."/>
            <person name="Steiner S."/>
            <person name="Mohr C."/>
            <person name="Poehlmann R."/>
            <person name="Luedi P."/>
            <person name="Choi S."/>
            <person name="Wing R.A."/>
            <person name="Flavier A."/>
            <person name="Gaffney T.D."/>
            <person name="Philippsen P."/>
        </authorList>
    </citation>
    <scope>NUCLEOTIDE SEQUENCE [LARGE SCALE GENOMIC DNA]</scope>
    <source>
        <strain>ATCC 10895 / CBS 109.51 / FGSC 9923 / NRRL Y-1056</strain>
    </source>
</reference>
<reference key="2">
    <citation type="journal article" date="2013" name="G3 (Bethesda)">
        <title>Genomes of Ashbya fungi isolated from insects reveal four mating-type loci, numerous translocations, lack of transposons, and distinct gene duplications.</title>
        <authorList>
            <person name="Dietrich F.S."/>
            <person name="Voegeli S."/>
            <person name="Kuo S."/>
            <person name="Philippsen P."/>
        </authorList>
    </citation>
    <scope>GENOME REANNOTATION</scope>
    <source>
        <strain>ATCC 10895 / CBS 109.51 / FGSC 9923 / NRRL Y-1056</strain>
    </source>
</reference>
<sequence length="554" mass="63162">MDEELQLKNWTELHNHIKSVLDRLDESRINESFQELLEVNVIRGRGILASEVVREERVVRQGAVLGALVELFEDYIPELGIMVSREALLLFLKSFRGGRTKYCYGLLALLCQLCNSDVMHEIGLLQLADLLLEVPRDRAVGMLCFMLGQAGAHLMNVCRTAHDQLLARLTDMLHDGKLSPTSSNRIQELLRLRRSNYKGQATKFSLPDHGVCTHRVTLELDIPARLEPDSSLGKFYVDNQFFDTEERFAALRRQALERFLGQQQQQAEPVKDMTNAEEVQYKKQIYLILKGSLTGDEAAHKLLKLRPDASQKATIVEIVVKACAQEQTYTKFYGILAERLCGSHRNWPTSFTNLFRDLYGTLHEFEPNQLRNMGKFWGHMLAADHIGLNLFECVHLSEHRTTPSSRVFLKFIFQELVADLGIAEVRKRLEDENAQPLVQGLFPKEGNADTVFAINYFTAIGLGVLTESMRTSLPTQAKSDSGNMSPNGQTLSYPSSRVPRRTRSRSPPRTRVRGDSPQRARVEQRYSRYDPGPAHRDRRRSRLSVTPPPRRNIH</sequence>
<proteinExistence type="inferred from homology"/>
<feature type="chain" id="PRO_0000215667" description="Pre-mRNA-splicing factor CWC22">
    <location>
        <begin position="1"/>
        <end position="554"/>
    </location>
</feature>
<feature type="domain" description="MIF4G" evidence="2">
    <location>
        <begin position="14"/>
        <end position="196"/>
    </location>
</feature>
<feature type="domain" description="MI" evidence="2">
    <location>
        <begin position="280"/>
        <end position="396"/>
    </location>
</feature>
<feature type="region of interest" description="Disordered" evidence="3">
    <location>
        <begin position="473"/>
        <end position="554"/>
    </location>
</feature>
<feature type="compositionally biased region" description="Polar residues" evidence="3">
    <location>
        <begin position="473"/>
        <end position="493"/>
    </location>
</feature>
<feature type="compositionally biased region" description="Basic residues" evidence="3">
    <location>
        <begin position="498"/>
        <end position="511"/>
    </location>
</feature>
<feature type="compositionally biased region" description="Basic and acidic residues" evidence="3">
    <location>
        <begin position="512"/>
        <end position="528"/>
    </location>
</feature>
<comment type="function">
    <text>May be involved in pre-mRNA splicing.</text>
</comment>
<comment type="subunit">
    <text evidence="1">Associated with the spliceosome.</text>
</comment>
<comment type="subcellular location">
    <subcellularLocation>
        <location evidence="1">Cytoplasm</location>
    </subcellularLocation>
    <subcellularLocation>
        <location evidence="1">Nucleus</location>
    </subcellularLocation>
</comment>
<comment type="similarity">
    <text evidence="4">Belongs to the CWC22 family.</text>
</comment>
<organism>
    <name type="scientific">Eremothecium gossypii (strain ATCC 10895 / CBS 109.51 / FGSC 9923 / NRRL Y-1056)</name>
    <name type="common">Yeast</name>
    <name type="synonym">Ashbya gossypii</name>
    <dbReference type="NCBI Taxonomy" id="284811"/>
    <lineage>
        <taxon>Eukaryota</taxon>
        <taxon>Fungi</taxon>
        <taxon>Dikarya</taxon>
        <taxon>Ascomycota</taxon>
        <taxon>Saccharomycotina</taxon>
        <taxon>Saccharomycetes</taxon>
        <taxon>Saccharomycetales</taxon>
        <taxon>Saccharomycetaceae</taxon>
        <taxon>Eremothecium</taxon>
    </lineage>
</organism>
<gene>
    <name type="primary">CWC22</name>
    <name type="ordered locus">AGL355W</name>
</gene>
<dbReference type="EMBL" id="AE016820">
    <property type="protein sequence ID" value="AAS54136.1"/>
    <property type="molecule type" value="Genomic_DNA"/>
</dbReference>
<dbReference type="RefSeq" id="NP_986312.1">
    <property type="nucleotide sequence ID" value="NM_211374.1"/>
</dbReference>
<dbReference type="SMR" id="Q751P4"/>
<dbReference type="FunCoup" id="Q751P4">
    <property type="interactions" value="965"/>
</dbReference>
<dbReference type="STRING" id="284811.Q751P4"/>
<dbReference type="EnsemblFungi" id="AAS54136">
    <property type="protein sequence ID" value="AAS54136"/>
    <property type="gene ID" value="AGOS_AGL355W"/>
</dbReference>
<dbReference type="GeneID" id="4622605"/>
<dbReference type="KEGG" id="ago:AGOS_AGL355W"/>
<dbReference type="eggNOG" id="KOG2140">
    <property type="taxonomic scope" value="Eukaryota"/>
</dbReference>
<dbReference type="HOGENOM" id="CLU_006308_3_3_1"/>
<dbReference type="InParanoid" id="Q751P4"/>
<dbReference type="OMA" id="ILTEDMR"/>
<dbReference type="OrthoDB" id="3938623at2759"/>
<dbReference type="Proteomes" id="UP000000591">
    <property type="component" value="Chromosome VII"/>
</dbReference>
<dbReference type="GO" id="GO:0071013">
    <property type="term" value="C:catalytic step 2 spliceosome"/>
    <property type="evidence" value="ECO:0000318"/>
    <property type="project" value="GO_Central"/>
</dbReference>
<dbReference type="GO" id="GO:0005737">
    <property type="term" value="C:cytoplasm"/>
    <property type="evidence" value="ECO:0007669"/>
    <property type="project" value="UniProtKB-SubCell"/>
</dbReference>
<dbReference type="GO" id="GO:0000974">
    <property type="term" value="C:Prp19 complex"/>
    <property type="evidence" value="ECO:0007669"/>
    <property type="project" value="EnsemblFungi"/>
</dbReference>
<dbReference type="GO" id="GO:0005684">
    <property type="term" value="C:U2-type spliceosomal complex"/>
    <property type="evidence" value="ECO:0007669"/>
    <property type="project" value="EnsemblFungi"/>
</dbReference>
<dbReference type="GO" id="GO:0003723">
    <property type="term" value="F:RNA binding"/>
    <property type="evidence" value="ECO:0000318"/>
    <property type="project" value="GO_Central"/>
</dbReference>
<dbReference type="GO" id="GO:0000398">
    <property type="term" value="P:mRNA splicing, via spliceosome"/>
    <property type="evidence" value="ECO:0000318"/>
    <property type="project" value="GO_Central"/>
</dbReference>
<dbReference type="Gene3D" id="1.25.40.180">
    <property type="match status" value="1"/>
</dbReference>
<dbReference type="InterPro" id="IPR016024">
    <property type="entry name" value="ARM-type_fold"/>
</dbReference>
<dbReference type="InterPro" id="IPR050781">
    <property type="entry name" value="CWC22_splicing_factor"/>
</dbReference>
<dbReference type="InterPro" id="IPR003891">
    <property type="entry name" value="Initiation_fac_eIF4g_MI"/>
</dbReference>
<dbReference type="PANTHER" id="PTHR18034">
    <property type="entry name" value="CELL CYCLE CONTROL PROTEIN CWF22-RELATED"/>
    <property type="match status" value="1"/>
</dbReference>
<dbReference type="PANTHER" id="PTHR18034:SF3">
    <property type="entry name" value="PRE-MRNA-SPLICING FACTOR CWC22 HOMOLOG"/>
    <property type="match status" value="1"/>
</dbReference>
<dbReference type="Pfam" id="PF02847">
    <property type="entry name" value="MA3"/>
    <property type="match status" value="1"/>
</dbReference>
<dbReference type="SMART" id="SM00544">
    <property type="entry name" value="MA3"/>
    <property type="match status" value="1"/>
</dbReference>
<dbReference type="SUPFAM" id="SSF48371">
    <property type="entry name" value="ARM repeat"/>
    <property type="match status" value="1"/>
</dbReference>
<dbReference type="PROSITE" id="PS51366">
    <property type="entry name" value="MI"/>
    <property type="match status" value="1"/>
</dbReference>
<accession>Q751P4</accession>
<evidence type="ECO:0000250" key="1"/>
<evidence type="ECO:0000255" key="2">
    <source>
        <dbReference type="PROSITE-ProRule" id="PRU00698"/>
    </source>
</evidence>
<evidence type="ECO:0000256" key="3">
    <source>
        <dbReference type="SAM" id="MobiDB-lite"/>
    </source>
</evidence>
<evidence type="ECO:0000305" key="4"/>